<proteinExistence type="inferred from homology"/>
<feature type="chain" id="PRO_1000020195" description="Methionyl-tRNA formyltransferase">
    <location>
        <begin position="1"/>
        <end position="310"/>
    </location>
</feature>
<feature type="region of interest" description="Disordered" evidence="2">
    <location>
        <begin position="283"/>
        <end position="310"/>
    </location>
</feature>
<feature type="compositionally biased region" description="Basic and acidic residues" evidence="2">
    <location>
        <begin position="300"/>
        <end position="310"/>
    </location>
</feature>
<feature type="binding site" evidence="1">
    <location>
        <begin position="109"/>
        <end position="112"/>
    </location>
    <ligand>
        <name>(6S)-5,6,7,8-tetrahydrofolate</name>
        <dbReference type="ChEBI" id="CHEBI:57453"/>
    </ligand>
</feature>
<dbReference type="EC" id="2.1.2.9" evidence="1"/>
<dbReference type="EMBL" id="CP000088">
    <property type="protein sequence ID" value="AAZ55113.1"/>
    <property type="molecule type" value="Genomic_DNA"/>
</dbReference>
<dbReference type="RefSeq" id="WP_011291522.1">
    <property type="nucleotide sequence ID" value="NC_007333.1"/>
</dbReference>
<dbReference type="SMR" id="Q47R04"/>
<dbReference type="STRING" id="269800.Tfu_1075"/>
<dbReference type="KEGG" id="tfu:Tfu_1075"/>
<dbReference type="eggNOG" id="COG0223">
    <property type="taxonomic scope" value="Bacteria"/>
</dbReference>
<dbReference type="HOGENOM" id="CLU_033347_1_0_11"/>
<dbReference type="OrthoDB" id="9802815at2"/>
<dbReference type="GO" id="GO:0005829">
    <property type="term" value="C:cytosol"/>
    <property type="evidence" value="ECO:0007669"/>
    <property type="project" value="TreeGrafter"/>
</dbReference>
<dbReference type="GO" id="GO:0004479">
    <property type="term" value="F:methionyl-tRNA formyltransferase activity"/>
    <property type="evidence" value="ECO:0007669"/>
    <property type="project" value="UniProtKB-UniRule"/>
</dbReference>
<dbReference type="CDD" id="cd08646">
    <property type="entry name" value="FMT_core_Met-tRNA-FMT_N"/>
    <property type="match status" value="1"/>
</dbReference>
<dbReference type="CDD" id="cd08704">
    <property type="entry name" value="Met_tRNA_FMT_C"/>
    <property type="match status" value="1"/>
</dbReference>
<dbReference type="FunFam" id="3.40.50.12230:FF:000001">
    <property type="entry name" value="Methionyl-tRNA formyltransferase"/>
    <property type="match status" value="1"/>
</dbReference>
<dbReference type="Gene3D" id="3.40.50.12230">
    <property type="match status" value="1"/>
</dbReference>
<dbReference type="HAMAP" id="MF_00182">
    <property type="entry name" value="Formyl_trans"/>
    <property type="match status" value="1"/>
</dbReference>
<dbReference type="InterPro" id="IPR005794">
    <property type="entry name" value="Fmt"/>
</dbReference>
<dbReference type="InterPro" id="IPR005793">
    <property type="entry name" value="Formyl_trans_C"/>
</dbReference>
<dbReference type="InterPro" id="IPR002376">
    <property type="entry name" value="Formyl_transf_N"/>
</dbReference>
<dbReference type="InterPro" id="IPR036477">
    <property type="entry name" value="Formyl_transf_N_sf"/>
</dbReference>
<dbReference type="InterPro" id="IPR011034">
    <property type="entry name" value="Formyl_transferase-like_C_sf"/>
</dbReference>
<dbReference type="InterPro" id="IPR044135">
    <property type="entry name" value="Met-tRNA-FMT_C"/>
</dbReference>
<dbReference type="InterPro" id="IPR041711">
    <property type="entry name" value="Met-tRNA-FMT_N"/>
</dbReference>
<dbReference type="NCBIfam" id="TIGR00460">
    <property type="entry name" value="fmt"/>
    <property type="match status" value="1"/>
</dbReference>
<dbReference type="PANTHER" id="PTHR11138">
    <property type="entry name" value="METHIONYL-TRNA FORMYLTRANSFERASE"/>
    <property type="match status" value="1"/>
</dbReference>
<dbReference type="PANTHER" id="PTHR11138:SF5">
    <property type="entry name" value="METHIONYL-TRNA FORMYLTRANSFERASE, MITOCHONDRIAL"/>
    <property type="match status" value="1"/>
</dbReference>
<dbReference type="Pfam" id="PF02911">
    <property type="entry name" value="Formyl_trans_C"/>
    <property type="match status" value="1"/>
</dbReference>
<dbReference type="Pfam" id="PF00551">
    <property type="entry name" value="Formyl_trans_N"/>
    <property type="match status" value="1"/>
</dbReference>
<dbReference type="SUPFAM" id="SSF50486">
    <property type="entry name" value="FMT C-terminal domain-like"/>
    <property type="match status" value="1"/>
</dbReference>
<dbReference type="SUPFAM" id="SSF53328">
    <property type="entry name" value="Formyltransferase"/>
    <property type="match status" value="1"/>
</dbReference>
<reference key="1">
    <citation type="journal article" date="2007" name="J. Bacteriol.">
        <title>Genome sequence and analysis of the soil cellulolytic actinomycete Thermobifida fusca YX.</title>
        <authorList>
            <person name="Lykidis A."/>
            <person name="Mavromatis K."/>
            <person name="Ivanova N."/>
            <person name="Anderson I."/>
            <person name="Land M."/>
            <person name="DiBartolo G."/>
            <person name="Martinez M."/>
            <person name="Lapidus A."/>
            <person name="Lucas S."/>
            <person name="Copeland A."/>
            <person name="Richardson P."/>
            <person name="Wilson D.B."/>
            <person name="Kyrpides N."/>
        </authorList>
    </citation>
    <scope>NUCLEOTIDE SEQUENCE [LARGE SCALE GENOMIC DNA]</scope>
    <source>
        <strain>YX</strain>
    </source>
</reference>
<gene>
    <name evidence="1" type="primary">fmt</name>
    <name type="ordered locus">Tfu_1075</name>
</gene>
<organism>
    <name type="scientific">Thermobifida fusca (strain YX)</name>
    <dbReference type="NCBI Taxonomy" id="269800"/>
    <lineage>
        <taxon>Bacteria</taxon>
        <taxon>Bacillati</taxon>
        <taxon>Actinomycetota</taxon>
        <taxon>Actinomycetes</taxon>
        <taxon>Streptosporangiales</taxon>
        <taxon>Nocardiopsidaceae</taxon>
        <taxon>Thermobifida</taxon>
    </lineage>
</organism>
<name>FMT_THEFY</name>
<protein>
    <recommendedName>
        <fullName evidence="1">Methionyl-tRNA formyltransferase</fullName>
        <ecNumber evidence="1">2.1.2.9</ecNumber>
    </recommendedName>
</protein>
<evidence type="ECO:0000255" key="1">
    <source>
        <dbReference type="HAMAP-Rule" id="MF_00182"/>
    </source>
</evidence>
<evidence type="ECO:0000256" key="2">
    <source>
        <dbReference type="SAM" id="MobiDB-lite"/>
    </source>
</evidence>
<accession>Q47R04</accession>
<sequence length="310" mass="33008">MRLVFAGTPEVAVPSLDALLASEHEVVAVVTRPDAAAGRGRRLVASPVARRAAEAGIEVLKPARADDPAFLDRLRELAPDCCPVVAYGALLRQEALDIPRYGWVNLHFSLLPAWRGAAPVQHAILHGDDITGATTFQIERELDAGPVYGTVTEPIGPRDTSGDLLERLAKSGAELLVRTIDGIAKNELVPRPQGSEGVSYAPKLTPDDARVDFTAPALRVDRLIRACTPAPGAWTRFRGTRIKLGPVEPLPDAAPLPPGQLVATSRDVLVGTATHPVRLGEVQPQGKKAMPAADWARGARIGDGERFGDD</sequence>
<comment type="function">
    <text evidence="1">Attaches a formyl group to the free amino group of methionyl-tRNA(fMet). The formyl group appears to play a dual role in the initiator identity of N-formylmethionyl-tRNA by promoting its recognition by IF2 and preventing the misappropriation of this tRNA by the elongation apparatus.</text>
</comment>
<comment type="catalytic activity">
    <reaction evidence="1">
        <text>L-methionyl-tRNA(fMet) + (6R)-10-formyltetrahydrofolate = N-formyl-L-methionyl-tRNA(fMet) + (6S)-5,6,7,8-tetrahydrofolate + H(+)</text>
        <dbReference type="Rhea" id="RHEA:24380"/>
        <dbReference type="Rhea" id="RHEA-COMP:9952"/>
        <dbReference type="Rhea" id="RHEA-COMP:9953"/>
        <dbReference type="ChEBI" id="CHEBI:15378"/>
        <dbReference type="ChEBI" id="CHEBI:57453"/>
        <dbReference type="ChEBI" id="CHEBI:78530"/>
        <dbReference type="ChEBI" id="CHEBI:78844"/>
        <dbReference type="ChEBI" id="CHEBI:195366"/>
        <dbReference type="EC" id="2.1.2.9"/>
    </reaction>
</comment>
<comment type="similarity">
    <text evidence="1">Belongs to the Fmt family.</text>
</comment>
<keyword id="KW-0648">Protein biosynthesis</keyword>
<keyword id="KW-0808">Transferase</keyword>